<organism>
    <name type="scientific">Bacillus licheniformis (strain ATCC 14580 / DSM 13 / JCM 2505 / CCUG 7422 / NBRC 12200 / NCIMB 9375 / NCTC 10341 / NRRL NRS-1264 / Gibson 46)</name>
    <dbReference type="NCBI Taxonomy" id="279010"/>
    <lineage>
        <taxon>Bacteria</taxon>
        <taxon>Bacillati</taxon>
        <taxon>Bacillota</taxon>
        <taxon>Bacilli</taxon>
        <taxon>Bacillales</taxon>
        <taxon>Bacillaceae</taxon>
        <taxon>Bacillus</taxon>
    </lineage>
</organism>
<proteinExistence type="inferred from homology"/>
<feature type="chain" id="PRO_0000383975" description="Lactate utilization protein B">
    <location>
        <begin position="1"/>
        <end position="477"/>
    </location>
</feature>
<feature type="domain" description="4Fe-4S ferredoxin-type 1" evidence="1">
    <location>
        <begin position="304"/>
        <end position="334"/>
    </location>
</feature>
<feature type="domain" description="4Fe-4S ferredoxin-type 2" evidence="1">
    <location>
        <begin position="353"/>
        <end position="382"/>
    </location>
</feature>
<feature type="region of interest" description="Disordered" evidence="2">
    <location>
        <begin position="433"/>
        <end position="477"/>
    </location>
</feature>
<feature type="compositionally biased region" description="Basic and acidic residues" evidence="2">
    <location>
        <begin position="461"/>
        <end position="477"/>
    </location>
</feature>
<feature type="binding site" evidence="1">
    <location>
        <position position="313"/>
    </location>
    <ligand>
        <name>[4Fe-4S] cluster</name>
        <dbReference type="ChEBI" id="CHEBI:49883"/>
        <label>1</label>
    </ligand>
</feature>
<feature type="binding site" evidence="1">
    <location>
        <position position="316"/>
    </location>
    <ligand>
        <name>[4Fe-4S] cluster</name>
        <dbReference type="ChEBI" id="CHEBI:49883"/>
        <label>1</label>
    </ligand>
</feature>
<feature type="binding site" evidence="1">
    <location>
        <position position="319"/>
    </location>
    <ligand>
        <name>[4Fe-4S] cluster</name>
        <dbReference type="ChEBI" id="CHEBI:49883"/>
        <label>1</label>
    </ligand>
</feature>
<feature type="binding site" evidence="1">
    <location>
        <position position="323"/>
    </location>
    <ligand>
        <name>[4Fe-4S] cluster</name>
        <dbReference type="ChEBI" id="CHEBI:49883"/>
        <label>2</label>
    </ligand>
</feature>
<feature type="binding site" evidence="1">
    <location>
        <position position="366"/>
    </location>
    <ligand>
        <name>[4Fe-4S] cluster</name>
        <dbReference type="ChEBI" id="CHEBI:49883"/>
        <label>2</label>
    </ligand>
</feature>
<feature type="binding site" evidence="1">
    <location>
        <position position="369"/>
    </location>
    <ligand>
        <name>[4Fe-4S] cluster</name>
        <dbReference type="ChEBI" id="CHEBI:49883"/>
        <label>2</label>
    </ligand>
</feature>
<feature type="binding site" evidence="1">
    <location>
        <position position="373"/>
    </location>
    <ligand>
        <name>[4Fe-4S] cluster</name>
        <dbReference type="ChEBI" id="CHEBI:49883"/>
        <label>1</label>
    </ligand>
</feature>
<evidence type="ECO:0000255" key="1">
    <source>
        <dbReference type="HAMAP-Rule" id="MF_02103"/>
    </source>
</evidence>
<evidence type="ECO:0000256" key="2">
    <source>
        <dbReference type="SAM" id="MobiDB-lite"/>
    </source>
</evidence>
<accession>Q65EM0</accession>
<accession>Q62Q37</accession>
<gene>
    <name evidence="1" type="primary">lutB</name>
    <name type="synonym">yvfW</name>
    <name type="ordered locus">BLi03674</name>
    <name type="ordered locus">BL03457</name>
</gene>
<sequence>MAMKIGTQKFKERVSDGLDNEFMRGAVSSAQERLRARRLEAAKELGNWEEWRSLAEEIRQHVLENLDYYLEQLAENVAKKGGHVFFAQTAEEATGYIRDVVKKKNGKKIVKSKSMVTEEINMNEALESDGCEVVETDLGEYILQIDDHDPPSHIVAPALHKNKEQIRDVFKERIGYRNTEKPEELVMHARAVLRKKFLEADIGITGCNFAIADTGSVSLVTNEGNGRLVTTIPKTQITVMGMERIVPSFDEFEVLVGMLTRSAVGQRLTSYITALTGPRLPGEADGPEEFHLVIVDNGRSNILGTEFQSVLQCIRCAACINVCPVYRHVGGHSYGSIYSGPIGAVLSPLLGGYDDYKELPYASSLCAACSEACPVKIPLHELLLKHRQRIVEKEGRAPISEKLAMKAFGLGTSAPSLYKMGSKWAPAAMKPFKEDGKITKGPGPLKQWTQIRDFPAPNKSRFRDWFEDRRKEKGEDK</sequence>
<dbReference type="EMBL" id="AE017333">
    <property type="protein sequence ID" value="AAU42494.1"/>
    <property type="molecule type" value="Genomic_DNA"/>
</dbReference>
<dbReference type="EMBL" id="CP000002">
    <property type="protein sequence ID" value="AAU25123.1"/>
    <property type="molecule type" value="Genomic_DNA"/>
</dbReference>
<dbReference type="RefSeq" id="WP_003185481.1">
    <property type="nucleotide sequence ID" value="NC_006322.1"/>
</dbReference>
<dbReference type="STRING" id="279010.BL03457"/>
<dbReference type="KEGG" id="bld:BLi03674"/>
<dbReference type="KEGG" id="bli:BL03457"/>
<dbReference type="eggNOG" id="COG1139">
    <property type="taxonomic scope" value="Bacteria"/>
</dbReference>
<dbReference type="HOGENOM" id="CLU_027059_2_0_9"/>
<dbReference type="Proteomes" id="UP000000606">
    <property type="component" value="Chromosome"/>
</dbReference>
<dbReference type="GO" id="GO:0051539">
    <property type="term" value="F:4 iron, 4 sulfur cluster binding"/>
    <property type="evidence" value="ECO:0007669"/>
    <property type="project" value="UniProtKB-KW"/>
</dbReference>
<dbReference type="GO" id="GO:0046872">
    <property type="term" value="F:metal ion binding"/>
    <property type="evidence" value="ECO:0007669"/>
    <property type="project" value="UniProtKB-KW"/>
</dbReference>
<dbReference type="GO" id="GO:0006089">
    <property type="term" value="P:lactate metabolic process"/>
    <property type="evidence" value="ECO:0007669"/>
    <property type="project" value="UniProtKB-UniRule"/>
</dbReference>
<dbReference type="Gene3D" id="1.10.1060.10">
    <property type="entry name" value="Alpha-helical ferredoxin"/>
    <property type="match status" value="1"/>
</dbReference>
<dbReference type="Gene3D" id="3.40.50.10420">
    <property type="entry name" value="NagB/RpiA/CoA transferase-like"/>
    <property type="match status" value="1"/>
</dbReference>
<dbReference type="HAMAP" id="MF_02103">
    <property type="entry name" value="LutB"/>
    <property type="match status" value="1"/>
</dbReference>
<dbReference type="InterPro" id="IPR017896">
    <property type="entry name" value="4Fe4S_Fe-S-bd"/>
</dbReference>
<dbReference type="InterPro" id="IPR017900">
    <property type="entry name" value="4Fe4S_Fe_S_CS"/>
</dbReference>
<dbReference type="InterPro" id="IPR024185">
    <property type="entry name" value="FTHF_cligase-like_sf"/>
</dbReference>
<dbReference type="InterPro" id="IPR009051">
    <property type="entry name" value="Helical_ferredxn"/>
</dbReference>
<dbReference type="InterPro" id="IPR003741">
    <property type="entry name" value="LUD_dom"/>
</dbReference>
<dbReference type="InterPro" id="IPR022825">
    <property type="entry name" value="LutB"/>
</dbReference>
<dbReference type="InterPro" id="IPR004452">
    <property type="entry name" value="LutB/LldF"/>
</dbReference>
<dbReference type="InterPro" id="IPR024569">
    <property type="entry name" value="LutB_C"/>
</dbReference>
<dbReference type="InterPro" id="IPR037171">
    <property type="entry name" value="NagB/RpiA_transferase-like"/>
</dbReference>
<dbReference type="NCBIfam" id="TIGR00273">
    <property type="entry name" value="LutB/LldF family L-lactate oxidation iron-sulfur protein"/>
    <property type="match status" value="1"/>
</dbReference>
<dbReference type="PANTHER" id="PTHR47153">
    <property type="entry name" value="LACTATE UTILIZATION PROTEIN B"/>
    <property type="match status" value="1"/>
</dbReference>
<dbReference type="PANTHER" id="PTHR47153:SF2">
    <property type="entry name" value="LACTATE UTILIZATION PROTEIN B"/>
    <property type="match status" value="1"/>
</dbReference>
<dbReference type="Pfam" id="PF13183">
    <property type="entry name" value="Fer4_8"/>
    <property type="match status" value="1"/>
</dbReference>
<dbReference type="Pfam" id="PF02589">
    <property type="entry name" value="LUD_dom"/>
    <property type="match status" value="1"/>
</dbReference>
<dbReference type="Pfam" id="PF11870">
    <property type="entry name" value="LutB_C"/>
    <property type="match status" value="1"/>
</dbReference>
<dbReference type="SUPFAM" id="SSF46548">
    <property type="entry name" value="alpha-helical ferredoxin"/>
    <property type="match status" value="1"/>
</dbReference>
<dbReference type="SUPFAM" id="SSF100950">
    <property type="entry name" value="NagB/RpiA/CoA transferase-like"/>
    <property type="match status" value="1"/>
</dbReference>
<dbReference type="PROSITE" id="PS00198">
    <property type="entry name" value="4FE4S_FER_1"/>
    <property type="match status" value="1"/>
</dbReference>
<name>LUTB_BACLD</name>
<reference key="1">
    <citation type="journal article" date="2004" name="J. Mol. Microbiol. Biotechnol.">
        <title>The complete genome sequence of Bacillus licheniformis DSM13, an organism with great industrial potential.</title>
        <authorList>
            <person name="Veith B."/>
            <person name="Herzberg C."/>
            <person name="Steckel S."/>
            <person name="Feesche J."/>
            <person name="Maurer K.H."/>
            <person name="Ehrenreich P."/>
            <person name="Baeumer S."/>
            <person name="Henne A."/>
            <person name="Liesegang H."/>
            <person name="Merkl R."/>
            <person name="Ehrenreich A."/>
            <person name="Gottschalk G."/>
        </authorList>
    </citation>
    <scope>NUCLEOTIDE SEQUENCE [LARGE SCALE GENOMIC DNA]</scope>
    <source>
        <strain>ATCC 14580 / DSM 13 / JCM 2505 / CCUG 7422 / NBRC 12200 / NCIMB 9375 / NCTC 10341 / NRRL NRS-1264 / Gibson 46</strain>
    </source>
</reference>
<reference key="2">
    <citation type="journal article" date="2004" name="Genome Biol.">
        <title>Complete genome sequence of the industrial bacterium Bacillus licheniformis and comparisons with closely related Bacillus species.</title>
        <authorList>
            <person name="Rey M.W."/>
            <person name="Ramaiya P."/>
            <person name="Nelson B.A."/>
            <person name="Brody-Karpin S.D."/>
            <person name="Zaretsky E.J."/>
            <person name="Tang M."/>
            <person name="Lopez de Leon A."/>
            <person name="Xiang H."/>
            <person name="Gusti V."/>
            <person name="Clausen I.G."/>
            <person name="Olsen P.B."/>
            <person name="Rasmussen M.D."/>
            <person name="Andersen J.T."/>
            <person name="Joergensen P.L."/>
            <person name="Larsen T.S."/>
            <person name="Sorokin A."/>
            <person name="Bolotin A."/>
            <person name="Lapidus A."/>
            <person name="Galleron N."/>
            <person name="Ehrlich S.D."/>
            <person name="Berka R.M."/>
        </authorList>
    </citation>
    <scope>NUCLEOTIDE SEQUENCE [LARGE SCALE GENOMIC DNA]</scope>
    <source>
        <strain>ATCC 14580 / DSM 13 / JCM 2505 / CCUG 7422 / NBRC 12200 / NCIMB 9375 / NCTC 10341 / NRRL NRS-1264 / Gibson 46</strain>
    </source>
</reference>
<comment type="function">
    <text evidence="1">Is involved in L-lactate degradation and allows cells to grow with lactate as the sole carbon source. Has probably a role as an electron transporter during oxidation of L-lactate.</text>
</comment>
<comment type="similarity">
    <text evidence="1">Belongs to the LutB/YkgF family.</text>
</comment>
<keyword id="KW-0004">4Fe-4S</keyword>
<keyword id="KW-0249">Electron transport</keyword>
<keyword id="KW-0408">Iron</keyword>
<keyword id="KW-0411">Iron-sulfur</keyword>
<keyword id="KW-0479">Metal-binding</keyword>
<keyword id="KW-1185">Reference proteome</keyword>
<keyword id="KW-0677">Repeat</keyword>
<keyword id="KW-0813">Transport</keyword>
<protein>
    <recommendedName>
        <fullName evidence="1">Lactate utilization protein B</fullName>
    </recommendedName>
</protein>